<evidence type="ECO:0000250" key="1"/>
<evidence type="ECO:0000305" key="2"/>
<name>CP23_SPOER</name>
<keyword id="KW-0903">Direct protein sequencing</keyword>
<keyword id="KW-1015">Disulfide bond</keyword>
<protein>
    <recommendedName>
        <fullName>Cardioactive peptide CAP23</fullName>
    </recommendedName>
</protein>
<organism>
    <name type="scientific">Spodoptera eridania</name>
    <name type="common">Southern armyworm</name>
    <dbReference type="NCBI Taxonomy" id="37547"/>
    <lineage>
        <taxon>Eukaryota</taxon>
        <taxon>Metazoa</taxon>
        <taxon>Ecdysozoa</taxon>
        <taxon>Arthropoda</taxon>
        <taxon>Hexapoda</taxon>
        <taxon>Insecta</taxon>
        <taxon>Pterygota</taxon>
        <taxon>Neoptera</taxon>
        <taxon>Endopterygota</taxon>
        <taxon>Lepidoptera</taxon>
        <taxon>Glossata</taxon>
        <taxon>Ditrysia</taxon>
        <taxon>Noctuoidea</taxon>
        <taxon>Noctuidae</taxon>
        <taxon>Amphipyrinae</taxon>
        <taxon>Spodoptera</taxon>
    </lineage>
</organism>
<accession>P56683</accession>
<reference key="1">
    <citation type="journal article" date="1999" name="Peptides">
        <title>A cardioactive peptide from the southern armyworm, Spodoptera eridania.</title>
        <authorList>
            <person name="Furuya K."/>
            <person name="Hackett M."/>
            <person name="Cirelli M.A."/>
            <person name="Schegg K.M."/>
            <person name="Wang H."/>
            <person name="Shabanowitz J."/>
            <person name="Hunt D.F."/>
            <person name="Schooley D.A."/>
        </authorList>
    </citation>
    <scope>PROTEIN SEQUENCE</scope>
</reference>
<proteinExistence type="evidence at protein level"/>
<dbReference type="InterPro" id="IPR003463">
    <property type="entry name" value="GBP_PSP"/>
</dbReference>
<dbReference type="Pfam" id="PF02425">
    <property type="entry name" value="GBP_PSP"/>
    <property type="match status" value="1"/>
</dbReference>
<comment type="function">
    <text>Has excitatory effects on a semi-isolated heart from larval Manduca sexta, causing an inotropic effect at low concentrations of peptide and chronotropic and inotropic effects at high doses.</text>
</comment>
<comment type="similarity">
    <text evidence="2">Belongs to the GBP/PSP1/paralytic peptide family.</text>
</comment>
<sequence>ENFAVGCTPGYQRTADGRCKPTF</sequence>
<feature type="peptide" id="PRO_0000043908" description="Cardioactive peptide CAP23">
    <location>
        <begin position="1"/>
        <end position="23"/>
    </location>
</feature>
<feature type="disulfide bond" evidence="1">
    <location>
        <begin position="7"/>
        <end position="19"/>
    </location>
</feature>